<reference key="1">
    <citation type="submission" date="2007-03" db="EMBL/GenBank/DDBJ databases">
        <title>Complete sequence of chromosome 1 of Burkholderia vietnamiensis G4.</title>
        <authorList>
            <consortium name="US DOE Joint Genome Institute"/>
            <person name="Copeland A."/>
            <person name="Lucas S."/>
            <person name="Lapidus A."/>
            <person name="Barry K."/>
            <person name="Detter J.C."/>
            <person name="Glavina del Rio T."/>
            <person name="Hammon N."/>
            <person name="Israni S."/>
            <person name="Dalin E."/>
            <person name="Tice H."/>
            <person name="Pitluck S."/>
            <person name="Chain P."/>
            <person name="Malfatti S."/>
            <person name="Shin M."/>
            <person name="Vergez L."/>
            <person name="Schmutz J."/>
            <person name="Larimer F."/>
            <person name="Land M."/>
            <person name="Hauser L."/>
            <person name="Kyrpides N."/>
            <person name="Tiedje J."/>
            <person name="Richardson P."/>
        </authorList>
    </citation>
    <scope>NUCLEOTIDE SEQUENCE [LARGE SCALE GENOMIC DNA]</scope>
    <source>
        <strain>G4 / LMG 22486</strain>
    </source>
</reference>
<name>RL33_BURVG</name>
<proteinExistence type="inferred from homology"/>
<accession>A4JH23</accession>
<comment type="similarity">
    <text evidence="1">Belongs to the bacterial ribosomal protein bL33 family.</text>
</comment>
<dbReference type="EMBL" id="CP000614">
    <property type="protein sequence ID" value="ABO55576.1"/>
    <property type="molecule type" value="Genomic_DNA"/>
</dbReference>
<dbReference type="SMR" id="A4JH23"/>
<dbReference type="KEGG" id="bvi:Bcep1808_2581"/>
<dbReference type="eggNOG" id="COG0267">
    <property type="taxonomic scope" value="Bacteria"/>
</dbReference>
<dbReference type="HOGENOM" id="CLU_190949_1_1_4"/>
<dbReference type="Proteomes" id="UP000002287">
    <property type="component" value="Chromosome 1"/>
</dbReference>
<dbReference type="GO" id="GO:0022625">
    <property type="term" value="C:cytosolic large ribosomal subunit"/>
    <property type="evidence" value="ECO:0007669"/>
    <property type="project" value="TreeGrafter"/>
</dbReference>
<dbReference type="GO" id="GO:0003735">
    <property type="term" value="F:structural constituent of ribosome"/>
    <property type="evidence" value="ECO:0007669"/>
    <property type="project" value="InterPro"/>
</dbReference>
<dbReference type="GO" id="GO:0006412">
    <property type="term" value="P:translation"/>
    <property type="evidence" value="ECO:0007669"/>
    <property type="project" value="UniProtKB-UniRule"/>
</dbReference>
<dbReference type="FunFam" id="2.20.28.120:FF:000001">
    <property type="entry name" value="50S ribosomal protein L33"/>
    <property type="match status" value="1"/>
</dbReference>
<dbReference type="Gene3D" id="2.20.28.120">
    <property type="entry name" value="Ribosomal protein L33"/>
    <property type="match status" value="1"/>
</dbReference>
<dbReference type="HAMAP" id="MF_00294">
    <property type="entry name" value="Ribosomal_bL33"/>
    <property type="match status" value="1"/>
</dbReference>
<dbReference type="InterPro" id="IPR001705">
    <property type="entry name" value="Ribosomal_bL33"/>
</dbReference>
<dbReference type="InterPro" id="IPR018264">
    <property type="entry name" value="Ribosomal_bL33_CS"/>
</dbReference>
<dbReference type="InterPro" id="IPR038584">
    <property type="entry name" value="Ribosomal_bL33_sf"/>
</dbReference>
<dbReference type="InterPro" id="IPR011332">
    <property type="entry name" value="Ribosomal_zn-bd"/>
</dbReference>
<dbReference type="NCBIfam" id="NF001860">
    <property type="entry name" value="PRK00595.1"/>
    <property type="match status" value="1"/>
</dbReference>
<dbReference type="NCBIfam" id="TIGR01023">
    <property type="entry name" value="rpmG_bact"/>
    <property type="match status" value="1"/>
</dbReference>
<dbReference type="PANTHER" id="PTHR15238">
    <property type="entry name" value="54S RIBOSOMAL PROTEIN L39, MITOCHONDRIAL"/>
    <property type="match status" value="1"/>
</dbReference>
<dbReference type="PANTHER" id="PTHR15238:SF1">
    <property type="entry name" value="LARGE RIBOSOMAL SUBUNIT PROTEIN BL33M"/>
    <property type="match status" value="1"/>
</dbReference>
<dbReference type="Pfam" id="PF00471">
    <property type="entry name" value="Ribosomal_L33"/>
    <property type="match status" value="1"/>
</dbReference>
<dbReference type="SUPFAM" id="SSF57829">
    <property type="entry name" value="Zn-binding ribosomal proteins"/>
    <property type="match status" value="1"/>
</dbReference>
<dbReference type="PROSITE" id="PS00582">
    <property type="entry name" value="RIBOSOMAL_L33"/>
    <property type="match status" value="1"/>
</dbReference>
<protein>
    <recommendedName>
        <fullName evidence="1">Large ribosomal subunit protein bL33</fullName>
    </recommendedName>
    <alternativeName>
        <fullName evidence="2">50S ribosomal protein L33</fullName>
    </alternativeName>
</protein>
<sequence>MAKGARDKIKLESTAGTGHFYTTTKNKRNMPEKMAIKKFDPVVRKHVEYKETKIK</sequence>
<keyword id="KW-0687">Ribonucleoprotein</keyword>
<keyword id="KW-0689">Ribosomal protein</keyword>
<feature type="chain" id="PRO_1000115120" description="Large ribosomal subunit protein bL33">
    <location>
        <begin position="1"/>
        <end position="55"/>
    </location>
</feature>
<evidence type="ECO:0000255" key="1">
    <source>
        <dbReference type="HAMAP-Rule" id="MF_00294"/>
    </source>
</evidence>
<evidence type="ECO:0000305" key="2"/>
<organism>
    <name type="scientific">Burkholderia vietnamiensis (strain G4 / LMG 22486)</name>
    <name type="common">Burkholderia cepacia (strain R1808)</name>
    <dbReference type="NCBI Taxonomy" id="269482"/>
    <lineage>
        <taxon>Bacteria</taxon>
        <taxon>Pseudomonadati</taxon>
        <taxon>Pseudomonadota</taxon>
        <taxon>Betaproteobacteria</taxon>
        <taxon>Burkholderiales</taxon>
        <taxon>Burkholderiaceae</taxon>
        <taxon>Burkholderia</taxon>
        <taxon>Burkholderia cepacia complex</taxon>
    </lineage>
</organism>
<gene>
    <name evidence="1" type="primary">rpmG</name>
    <name type="ordered locus">Bcep1808_2581</name>
</gene>